<evidence type="ECO:0000255" key="1">
    <source>
        <dbReference type="HAMAP-Rule" id="MF_01363"/>
    </source>
</evidence>
<evidence type="ECO:0000305" key="2"/>
<keyword id="KW-1185">Reference proteome</keyword>
<keyword id="KW-0687">Ribonucleoprotein</keyword>
<keyword id="KW-0689">Ribosomal protein</keyword>
<keyword id="KW-0694">RNA-binding</keyword>
<keyword id="KW-0699">rRNA-binding</keyword>
<proteinExistence type="inferred from homology"/>
<comment type="function">
    <text evidence="1">This protein binds to 23S rRNA in the presence of protein L20.</text>
</comment>
<comment type="subunit">
    <text evidence="1">Part of the 50S ribosomal subunit. Contacts protein L20.</text>
</comment>
<comment type="similarity">
    <text evidence="1">Belongs to the bacterial ribosomal protein bL21 family.</text>
</comment>
<protein>
    <recommendedName>
        <fullName evidence="1">Large ribosomal subunit protein bL21</fullName>
    </recommendedName>
    <alternativeName>
        <fullName evidence="2">50S ribosomal protein L21</fullName>
    </alternativeName>
</protein>
<feature type="chain" id="PRO_0000270736" description="Large ribosomal subunit protein bL21">
    <location>
        <begin position="1"/>
        <end position="198"/>
    </location>
</feature>
<accession>Q1GHD3</accession>
<organism>
    <name type="scientific">Ruegeria sp. (strain TM1040)</name>
    <name type="common">Silicibacter sp.</name>
    <dbReference type="NCBI Taxonomy" id="292414"/>
    <lineage>
        <taxon>Bacteria</taxon>
        <taxon>Pseudomonadati</taxon>
        <taxon>Pseudomonadota</taxon>
        <taxon>Alphaproteobacteria</taxon>
        <taxon>Rhodobacterales</taxon>
        <taxon>Roseobacteraceae</taxon>
        <taxon>Ruegeria</taxon>
    </lineage>
</organism>
<reference key="1">
    <citation type="submission" date="2006-05" db="EMBL/GenBank/DDBJ databases">
        <title>Complete sequence of chromosome of Silicibacter sp. TM1040.</title>
        <authorList>
            <consortium name="US DOE Joint Genome Institute"/>
            <person name="Copeland A."/>
            <person name="Lucas S."/>
            <person name="Lapidus A."/>
            <person name="Barry K."/>
            <person name="Detter J.C."/>
            <person name="Glavina del Rio T."/>
            <person name="Hammon N."/>
            <person name="Israni S."/>
            <person name="Dalin E."/>
            <person name="Tice H."/>
            <person name="Pitluck S."/>
            <person name="Brettin T."/>
            <person name="Bruce D."/>
            <person name="Han C."/>
            <person name="Tapia R."/>
            <person name="Goodwin L."/>
            <person name="Thompson L.S."/>
            <person name="Gilna P."/>
            <person name="Schmutz J."/>
            <person name="Larimer F."/>
            <person name="Land M."/>
            <person name="Hauser L."/>
            <person name="Kyrpides N."/>
            <person name="Kim E."/>
            <person name="Belas R."/>
            <person name="Moran M.A."/>
            <person name="Buchan A."/>
            <person name="Gonzalez J.M."/>
            <person name="Schell M.A."/>
            <person name="Sun F."/>
            <person name="Richardson P."/>
        </authorList>
    </citation>
    <scope>NUCLEOTIDE SEQUENCE [LARGE SCALE GENOMIC DNA]</scope>
    <source>
        <strain>TM1040</strain>
    </source>
</reference>
<gene>
    <name evidence="1" type="primary">rplU</name>
    <name type="ordered locus">TM1040_1200</name>
</gene>
<name>RL21_RUEST</name>
<sequence>MFAVLKTGGKQYKVQAGDMLRVEKLAADAGETVQFNDVLMIGGDAPVVGAPFVSGAAVQAEVVEQIKGDKVIKFVKRRRKHSSKRTVGHRQKLTLVKITEILASGADASGVKAATGKGEAAPAAKAAPKAKAAAPAAAGSDDLTQLTGVGPAAAKKLEAAGLTTFAQIAALSEDDIAGIDAIKIKPEWVEQAKELAQG</sequence>
<dbReference type="EMBL" id="CP000377">
    <property type="protein sequence ID" value="ABF63933.1"/>
    <property type="molecule type" value="Genomic_DNA"/>
</dbReference>
<dbReference type="RefSeq" id="WP_011538540.1">
    <property type="nucleotide sequence ID" value="NC_008044.1"/>
</dbReference>
<dbReference type="SMR" id="Q1GHD3"/>
<dbReference type="STRING" id="292414.TM1040_1200"/>
<dbReference type="KEGG" id="sit:TM1040_1200"/>
<dbReference type="eggNOG" id="COG0261">
    <property type="taxonomic scope" value="Bacteria"/>
</dbReference>
<dbReference type="eggNOG" id="COG3743">
    <property type="taxonomic scope" value="Bacteria"/>
</dbReference>
<dbReference type="HOGENOM" id="CLU_061463_1_0_5"/>
<dbReference type="OrthoDB" id="9813334at2"/>
<dbReference type="Proteomes" id="UP000000636">
    <property type="component" value="Chromosome"/>
</dbReference>
<dbReference type="GO" id="GO:0005737">
    <property type="term" value="C:cytoplasm"/>
    <property type="evidence" value="ECO:0007669"/>
    <property type="project" value="UniProtKB-ARBA"/>
</dbReference>
<dbReference type="GO" id="GO:1990904">
    <property type="term" value="C:ribonucleoprotein complex"/>
    <property type="evidence" value="ECO:0007669"/>
    <property type="project" value="UniProtKB-KW"/>
</dbReference>
<dbReference type="GO" id="GO:0005840">
    <property type="term" value="C:ribosome"/>
    <property type="evidence" value="ECO:0007669"/>
    <property type="project" value="UniProtKB-KW"/>
</dbReference>
<dbReference type="GO" id="GO:0000166">
    <property type="term" value="F:nucleotide binding"/>
    <property type="evidence" value="ECO:0007669"/>
    <property type="project" value="InterPro"/>
</dbReference>
<dbReference type="GO" id="GO:0019843">
    <property type="term" value="F:rRNA binding"/>
    <property type="evidence" value="ECO:0007669"/>
    <property type="project" value="UniProtKB-UniRule"/>
</dbReference>
<dbReference type="GO" id="GO:0003735">
    <property type="term" value="F:structural constituent of ribosome"/>
    <property type="evidence" value="ECO:0007669"/>
    <property type="project" value="InterPro"/>
</dbReference>
<dbReference type="GO" id="GO:0006412">
    <property type="term" value="P:translation"/>
    <property type="evidence" value="ECO:0007669"/>
    <property type="project" value="UniProtKB-UniRule"/>
</dbReference>
<dbReference type="Gene3D" id="1.10.150.20">
    <property type="entry name" value="5' to 3' exonuclease, C-terminal subdomain"/>
    <property type="match status" value="1"/>
</dbReference>
<dbReference type="HAMAP" id="MF_01363">
    <property type="entry name" value="Ribosomal_bL21"/>
    <property type="match status" value="1"/>
</dbReference>
<dbReference type="InterPro" id="IPR028909">
    <property type="entry name" value="bL21-like"/>
</dbReference>
<dbReference type="InterPro" id="IPR036164">
    <property type="entry name" value="bL21-like_sf"/>
</dbReference>
<dbReference type="InterPro" id="IPR010995">
    <property type="entry name" value="DNA_repair_Rad51/TF_NusA_a-hlx"/>
</dbReference>
<dbReference type="InterPro" id="IPR001787">
    <property type="entry name" value="Ribosomal_bL21"/>
</dbReference>
<dbReference type="NCBIfam" id="TIGR00061">
    <property type="entry name" value="L21"/>
    <property type="match status" value="1"/>
</dbReference>
<dbReference type="NCBIfam" id="NF008915">
    <property type="entry name" value="PRK12278.1-1"/>
    <property type="match status" value="1"/>
</dbReference>
<dbReference type="NCBIfam" id="NF008916">
    <property type="entry name" value="PRK12278.1-4"/>
    <property type="match status" value="1"/>
</dbReference>
<dbReference type="PANTHER" id="PTHR21349">
    <property type="entry name" value="50S RIBOSOMAL PROTEIN L21"/>
    <property type="match status" value="1"/>
</dbReference>
<dbReference type="PANTHER" id="PTHR21349:SF0">
    <property type="entry name" value="LARGE RIBOSOMAL SUBUNIT PROTEIN BL21M"/>
    <property type="match status" value="1"/>
</dbReference>
<dbReference type="Pfam" id="PF14520">
    <property type="entry name" value="HHH_5"/>
    <property type="match status" value="1"/>
</dbReference>
<dbReference type="Pfam" id="PF00829">
    <property type="entry name" value="Ribosomal_L21p"/>
    <property type="match status" value="1"/>
</dbReference>
<dbReference type="SUPFAM" id="SSF141091">
    <property type="entry name" value="L21p-like"/>
    <property type="match status" value="1"/>
</dbReference>
<dbReference type="SUPFAM" id="SSF47794">
    <property type="entry name" value="Rad51 N-terminal domain-like"/>
    <property type="match status" value="1"/>
</dbReference>